<proteinExistence type="inferred from homology"/>
<protein>
    <recommendedName>
        <fullName evidence="1">3-methyl-2-oxobutanoate hydroxymethyltransferase</fullName>
        <ecNumber evidence="1">2.1.2.11</ecNumber>
    </recommendedName>
    <alternativeName>
        <fullName evidence="1">Ketopantoate hydroxymethyltransferase</fullName>
        <shortName evidence="1">KPHMT</shortName>
    </alternativeName>
</protein>
<gene>
    <name evidence="1" type="primary">panB</name>
    <name type="ordered locus">NP_4334A</name>
</gene>
<accession>Q3INP4</accession>
<comment type="function">
    <text evidence="1">Catalyzes the reversible reaction in which hydroxymethyl group from 5,10-methylenetetrahydrofolate is transferred onto alpha-ketoisovalerate to form ketopantoate.</text>
</comment>
<comment type="catalytic activity">
    <reaction evidence="1">
        <text>3-methyl-2-oxobutanoate + (6R)-5,10-methylene-5,6,7,8-tetrahydrofolate + H2O = 2-dehydropantoate + (6S)-5,6,7,8-tetrahydrofolate</text>
        <dbReference type="Rhea" id="RHEA:11824"/>
        <dbReference type="ChEBI" id="CHEBI:11561"/>
        <dbReference type="ChEBI" id="CHEBI:11851"/>
        <dbReference type="ChEBI" id="CHEBI:15377"/>
        <dbReference type="ChEBI" id="CHEBI:15636"/>
        <dbReference type="ChEBI" id="CHEBI:57453"/>
        <dbReference type="EC" id="2.1.2.11"/>
    </reaction>
</comment>
<comment type="cofactor">
    <cofactor evidence="1">
        <name>Mg(2+)</name>
        <dbReference type="ChEBI" id="CHEBI:18420"/>
    </cofactor>
    <text evidence="1">Binds 1 Mg(2+) ion per subunit.</text>
</comment>
<comment type="pathway">
    <text evidence="1">Cofactor biosynthesis; coenzyme A biosynthesis.</text>
</comment>
<comment type="subunit">
    <text evidence="1">Homodecamer; pentamer of dimers.</text>
</comment>
<comment type="subcellular location">
    <subcellularLocation>
        <location evidence="1">Cytoplasm</location>
    </subcellularLocation>
</comment>
<comment type="similarity">
    <text evidence="1">Belongs to the PanB family.</text>
</comment>
<sequence>MRAKDIRAKAGDEPITMLTAYDAPTAEIAEAAGVDVLLVGDSVGNTRLGYDSTLPVTVDEMASHTAAVARATDDALVVADMPFLSFGADEADAVDNCGRMLKEADADAVKLECGPHTVSLTKTLSDLGIPVQAHLGLTPQRENETGLYRQGTDEESANRILELAREHEAAGAFSLVLEHVPANLAASVTDALSIPTIGIGAGPDCDGQVLVVDEVVGLAEGTAPFSKRFGDVRGEMREAIEAYTDAVDSGSFPGDEHSHYEDDIEDIY</sequence>
<feature type="chain" id="PRO_0000297423" description="3-methyl-2-oxobutanoate hydroxymethyltransferase">
    <location>
        <begin position="1"/>
        <end position="268"/>
    </location>
</feature>
<feature type="active site" description="Proton acceptor" evidence="1">
    <location>
        <position position="178"/>
    </location>
</feature>
<feature type="binding site" evidence="1">
    <location>
        <begin position="41"/>
        <end position="42"/>
    </location>
    <ligand>
        <name>3-methyl-2-oxobutanoate</name>
        <dbReference type="ChEBI" id="CHEBI:11851"/>
    </ligand>
</feature>
<feature type="binding site" evidence="1">
    <location>
        <position position="41"/>
    </location>
    <ligand>
        <name>Mg(2+)</name>
        <dbReference type="ChEBI" id="CHEBI:18420"/>
    </ligand>
</feature>
<feature type="binding site" evidence="1">
    <location>
        <position position="80"/>
    </location>
    <ligand>
        <name>3-methyl-2-oxobutanoate</name>
        <dbReference type="ChEBI" id="CHEBI:11851"/>
    </ligand>
</feature>
<feature type="binding site" evidence="1">
    <location>
        <position position="80"/>
    </location>
    <ligand>
        <name>Mg(2+)</name>
        <dbReference type="ChEBI" id="CHEBI:18420"/>
    </ligand>
</feature>
<feature type="binding site" evidence="1">
    <location>
        <position position="110"/>
    </location>
    <ligand>
        <name>3-methyl-2-oxobutanoate</name>
        <dbReference type="ChEBI" id="CHEBI:11851"/>
    </ligand>
</feature>
<feature type="binding site" evidence="1">
    <location>
        <position position="112"/>
    </location>
    <ligand>
        <name>Mg(2+)</name>
        <dbReference type="ChEBI" id="CHEBI:18420"/>
    </ligand>
</feature>
<name>PANB_NATPD</name>
<organism>
    <name type="scientific">Natronomonas pharaonis (strain ATCC 35678 / DSM 2160 / CIP 103997 / JCM 8858 / NBRC 14720 / NCIMB 2260 / Gabara)</name>
    <name type="common">Halobacterium pharaonis</name>
    <dbReference type="NCBI Taxonomy" id="348780"/>
    <lineage>
        <taxon>Archaea</taxon>
        <taxon>Methanobacteriati</taxon>
        <taxon>Methanobacteriota</taxon>
        <taxon>Stenosarchaea group</taxon>
        <taxon>Halobacteria</taxon>
        <taxon>Halobacteriales</taxon>
        <taxon>Haloarculaceae</taxon>
        <taxon>Natronomonas</taxon>
    </lineage>
</organism>
<dbReference type="EC" id="2.1.2.11" evidence="1"/>
<dbReference type="EMBL" id="CR936257">
    <property type="protein sequence ID" value="CAI50258.1"/>
    <property type="molecule type" value="Genomic_DNA"/>
</dbReference>
<dbReference type="RefSeq" id="WP_011323874.1">
    <property type="nucleotide sequence ID" value="NC_007426.1"/>
</dbReference>
<dbReference type="SMR" id="Q3INP4"/>
<dbReference type="STRING" id="348780.NP_4334A"/>
<dbReference type="EnsemblBacteria" id="CAI50258">
    <property type="protein sequence ID" value="CAI50258"/>
    <property type="gene ID" value="NP_4334A"/>
</dbReference>
<dbReference type="GeneID" id="3703006"/>
<dbReference type="KEGG" id="nph:NP_4334A"/>
<dbReference type="eggNOG" id="arCOG00584">
    <property type="taxonomic scope" value="Archaea"/>
</dbReference>
<dbReference type="HOGENOM" id="CLU_036645_1_0_2"/>
<dbReference type="OrthoDB" id="8414at2157"/>
<dbReference type="UniPathway" id="UPA00241"/>
<dbReference type="Proteomes" id="UP000002698">
    <property type="component" value="Chromosome"/>
</dbReference>
<dbReference type="GO" id="GO:0005737">
    <property type="term" value="C:cytoplasm"/>
    <property type="evidence" value="ECO:0007669"/>
    <property type="project" value="UniProtKB-SubCell"/>
</dbReference>
<dbReference type="GO" id="GO:0003864">
    <property type="term" value="F:3-methyl-2-oxobutanoate hydroxymethyltransferase activity"/>
    <property type="evidence" value="ECO:0007669"/>
    <property type="project" value="UniProtKB-UniRule"/>
</dbReference>
<dbReference type="GO" id="GO:0000287">
    <property type="term" value="F:magnesium ion binding"/>
    <property type="evidence" value="ECO:0007669"/>
    <property type="project" value="TreeGrafter"/>
</dbReference>
<dbReference type="GO" id="GO:0015937">
    <property type="term" value="P:coenzyme A biosynthetic process"/>
    <property type="evidence" value="ECO:0007669"/>
    <property type="project" value="UniProtKB-UniRule"/>
</dbReference>
<dbReference type="GO" id="GO:0015940">
    <property type="term" value="P:pantothenate biosynthetic process"/>
    <property type="evidence" value="ECO:0007669"/>
    <property type="project" value="InterPro"/>
</dbReference>
<dbReference type="CDD" id="cd06557">
    <property type="entry name" value="KPHMT-like"/>
    <property type="match status" value="1"/>
</dbReference>
<dbReference type="FunFam" id="3.20.20.60:FF:000003">
    <property type="entry name" value="3-methyl-2-oxobutanoate hydroxymethyltransferase"/>
    <property type="match status" value="1"/>
</dbReference>
<dbReference type="Gene3D" id="3.20.20.60">
    <property type="entry name" value="Phosphoenolpyruvate-binding domains"/>
    <property type="match status" value="1"/>
</dbReference>
<dbReference type="HAMAP" id="MF_00156">
    <property type="entry name" value="PanB"/>
    <property type="match status" value="1"/>
</dbReference>
<dbReference type="InterPro" id="IPR003700">
    <property type="entry name" value="Pantoate_hydroxy_MeTrfase"/>
</dbReference>
<dbReference type="InterPro" id="IPR015813">
    <property type="entry name" value="Pyrv/PenolPyrv_kinase-like_dom"/>
</dbReference>
<dbReference type="InterPro" id="IPR040442">
    <property type="entry name" value="Pyrv_kinase-like_dom_sf"/>
</dbReference>
<dbReference type="NCBIfam" id="TIGR00222">
    <property type="entry name" value="panB"/>
    <property type="match status" value="1"/>
</dbReference>
<dbReference type="NCBIfam" id="NF001452">
    <property type="entry name" value="PRK00311.1"/>
    <property type="match status" value="1"/>
</dbReference>
<dbReference type="PANTHER" id="PTHR20881">
    <property type="entry name" value="3-METHYL-2-OXOBUTANOATE HYDROXYMETHYLTRANSFERASE"/>
    <property type="match status" value="1"/>
</dbReference>
<dbReference type="PANTHER" id="PTHR20881:SF0">
    <property type="entry name" value="3-METHYL-2-OXOBUTANOATE HYDROXYMETHYLTRANSFERASE"/>
    <property type="match status" value="1"/>
</dbReference>
<dbReference type="Pfam" id="PF02548">
    <property type="entry name" value="Pantoate_transf"/>
    <property type="match status" value="1"/>
</dbReference>
<dbReference type="PIRSF" id="PIRSF000388">
    <property type="entry name" value="Pantoate_hydroxy_MeTrfase"/>
    <property type="match status" value="1"/>
</dbReference>
<dbReference type="SUPFAM" id="SSF51621">
    <property type="entry name" value="Phosphoenolpyruvate/pyruvate domain"/>
    <property type="match status" value="1"/>
</dbReference>
<reference key="1">
    <citation type="journal article" date="2005" name="Genome Res.">
        <title>Living with two extremes: conclusions from the genome sequence of Natronomonas pharaonis.</title>
        <authorList>
            <person name="Falb M."/>
            <person name="Pfeiffer F."/>
            <person name="Palm P."/>
            <person name="Rodewald K."/>
            <person name="Hickmann V."/>
            <person name="Tittor J."/>
            <person name="Oesterhelt D."/>
        </authorList>
    </citation>
    <scope>NUCLEOTIDE SEQUENCE [LARGE SCALE GENOMIC DNA]</scope>
    <source>
        <strain>ATCC 35678 / DSM 2160 / CIP 103997 / JCM 8858 / NBRC 14720 / NCIMB 2260 / Gabara</strain>
    </source>
</reference>
<keyword id="KW-0173">Coenzyme A biosynthesis</keyword>
<keyword id="KW-0963">Cytoplasm</keyword>
<keyword id="KW-0460">Magnesium</keyword>
<keyword id="KW-0479">Metal-binding</keyword>
<keyword id="KW-1185">Reference proteome</keyword>
<keyword id="KW-0808">Transferase</keyword>
<evidence type="ECO:0000255" key="1">
    <source>
        <dbReference type="HAMAP-Rule" id="MF_00156"/>
    </source>
</evidence>